<name>MST7_ORYSJ</name>
<evidence type="ECO:0000250" key="1">
    <source>
        <dbReference type="UniProtKB" id="Q6Z401"/>
    </source>
</evidence>
<evidence type="ECO:0000255" key="2"/>
<evidence type="ECO:0000269" key="3">
    <source>
    </source>
</evidence>
<evidence type="ECO:0000303" key="4">
    <source>
    </source>
</evidence>
<evidence type="ECO:0000305" key="5"/>
<evidence type="ECO:0000312" key="6">
    <source>
        <dbReference type="EMBL" id="BAB63496.1"/>
    </source>
</evidence>
<evidence type="ECO:0000312" key="7">
    <source>
        <dbReference type="EMBL" id="BAF05284.1"/>
    </source>
</evidence>
<evidence type="ECO:0000312" key="8">
    <source>
        <dbReference type="EMBL" id="EAZ12379.1"/>
    </source>
</evidence>
<accession>Q94EC3</accession>
<feature type="chain" id="PRO_0000441041" description="Sugar transport protein MST7">
    <location>
        <begin position="1"/>
        <end position="512"/>
    </location>
</feature>
<feature type="topological domain" description="Cytoplasmic" evidence="5">
    <location>
        <begin position="1"/>
        <end position="17"/>
    </location>
</feature>
<feature type="transmembrane region" description="Helical" evidence="2">
    <location>
        <begin position="18"/>
        <end position="38"/>
    </location>
</feature>
<feature type="topological domain" description="Extracellular" evidence="5">
    <location>
        <begin position="39"/>
        <end position="81"/>
    </location>
</feature>
<feature type="transmembrane region" description="Helical" evidence="2">
    <location>
        <begin position="82"/>
        <end position="102"/>
    </location>
</feature>
<feature type="topological domain" description="Cytoplasmic" evidence="5">
    <location>
        <begin position="103"/>
        <end position="116"/>
    </location>
</feature>
<feature type="transmembrane region" description="Helical" evidence="2">
    <location>
        <begin position="117"/>
        <end position="137"/>
    </location>
</feature>
<feature type="topological domain" description="Extracellular" evidence="5">
    <location>
        <begin position="138"/>
        <end position="139"/>
    </location>
</feature>
<feature type="transmembrane region" description="Helical" evidence="2">
    <location>
        <begin position="140"/>
        <end position="160"/>
    </location>
</feature>
<feature type="topological domain" description="Cytoplasmic" evidence="5">
    <location>
        <begin position="161"/>
        <end position="166"/>
    </location>
</feature>
<feature type="transmembrane region" description="Helical" evidence="2">
    <location>
        <begin position="167"/>
        <end position="187"/>
    </location>
</feature>
<feature type="topological domain" description="Extracellular" evidence="5">
    <location>
        <begin position="188"/>
        <end position="201"/>
    </location>
</feature>
<feature type="transmembrane region" description="Helical" evidence="2">
    <location>
        <begin position="202"/>
        <end position="222"/>
    </location>
</feature>
<feature type="topological domain" description="Cytoplasmic" evidence="5">
    <location>
        <begin position="223"/>
        <end position="294"/>
    </location>
</feature>
<feature type="transmembrane region" description="Helical" evidence="2">
    <location>
        <begin position="295"/>
        <end position="315"/>
    </location>
</feature>
<feature type="topological domain" description="Extracellular" evidence="5">
    <location>
        <begin position="316"/>
        <end position="320"/>
    </location>
</feature>
<feature type="transmembrane region" description="Helical" evidence="2">
    <location>
        <begin position="321"/>
        <end position="341"/>
    </location>
</feature>
<feature type="topological domain" description="Cytoplasmic" evidence="5">
    <location>
        <begin position="342"/>
        <end position="347"/>
    </location>
</feature>
<feature type="transmembrane region" description="Helical" evidence="2">
    <location>
        <begin position="348"/>
        <end position="368"/>
    </location>
</feature>
<feature type="topological domain" description="Extracellular" evidence="5">
    <location>
        <begin position="369"/>
        <end position="385"/>
    </location>
</feature>
<feature type="transmembrane region" description="Helical" evidence="2">
    <location>
        <begin position="386"/>
        <end position="406"/>
    </location>
</feature>
<feature type="topological domain" description="Cytoplasmic" evidence="5">
    <location>
        <begin position="407"/>
        <end position="425"/>
    </location>
</feature>
<feature type="transmembrane region" description="Helical" evidence="2">
    <location>
        <begin position="426"/>
        <end position="446"/>
    </location>
</feature>
<feature type="topological domain" description="Extracellular" evidence="5">
    <location>
        <begin position="447"/>
        <end position="450"/>
    </location>
</feature>
<feature type="transmembrane region" description="Helical" evidence="2">
    <location>
        <begin position="451"/>
        <end position="471"/>
    </location>
</feature>
<feature type="topological domain" description="Cytoplasmic" evidence="5">
    <location>
        <begin position="472"/>
        <end position="512"/>
    </location>
</feature>
<comment type="function">
    <text evidence="1">Mediates active uptake of hexoses by sugar:proton symport.</text>
</comment>
<comment type="subcellular location">
    <subcellularLocation>
        <location evidence="2">Membrane</location>
        <topology evidence="2">Multi-pass membrane protein</topology>
    </subcellularLocation>
</comment>
<comment type="induction">
    <text evidence="3">Induced by cold and abscisic acid (ABA).</text>
</comment>
<comment type="similarity">
    <text evidence="5">Belongs to the major facilitator superfamily. Sugar transporter (TC 2.A.1.1) family.</text>
</comment>
<sequence length="512" mass="55991">MENAGAGDGAPKHYPGKMTVFVFIACLVASSGGLIFGYDIGISGGVTSMDPFLSRFFPSVYAKEKEVVDTNQYCKFDSEPLTLFTSSLYLAALIASLFASVITRKLGRKMTMLGGGFIFLIGAVLNGAAVNVAMLIIGRILLGIGVGFSIQAVPLYLSEMAPAKMRGMLNIIFQLMITVGILFANLINYFTDKIAGGWGWRVSLGLAAVPAVIMTVGSILLPDTPNSLLSRGKENEARTMLRRIRGTEDIGPEYDDLVAASEATKAIENPWRTLLERRYRPQLVMSVLIPTLQQLTGINVVMFYAPVLFKTIGFGGTASLMSAVITGLVNMFATFVSIATVDRFGRRVLFIQGGIQMIIAQFILGTLIAVKFGTAGVANISQGYAIVVVLFICLFVSAFAWSWGPLGWLVPSEIFPLEIRSAAQSVVVVFNMAFTFFIAQIFLMMLCRLKFGLFFFFGAMELIMTGFVLVFLPETKGIPIEEMDRIWGEHWYWSRFVGAGRNRVMQMASTNV</sequence>
<proteinExistence type="evidence at transcript level"/>
<protein>
    <recommendedName>
        <fullName evidence="5">Sugar transport protein MST7</fullName>
    </recommendedName>
    <alternativeName>
        <fullName evidence="4">Monosaccharide transporter 7</fullName>
        <shortName evidence="4">OsMST7</shortName>
    </alternativeName>
    <alternativeName>
        <fullName evidence="5">Sugar:proton symporter MST7</fullName>
    </alternativeName>
</protein>
<organism>
    <name type="scientific">Oryza sativa subsp. japonica</name>
    <name type="common">Rice</name>
    <dbReference type="NCBI Taxonomy" id="39947"/>
    <lineage>
        <taxon>Eukaryota</taxon>
        <taxon>Viridiplantae</taxon>
        <taxon>Streptophyta</taxon>
        <taxon>Embryophyta</taxon>
        <taxon>Tracheophyta</taxon>
        <taxon>Spermatophyta</taxon>
        <taxon>Magnoliopsida</taxon>
        <taxon>Liliopsida</taxon>
        <taxon>Poales</taxon>
        <taxon>Poaceae</taxon>
        <taxon>BOP clade</taxon>
        <taxon>Oryzoideae</taxon>
        <taxon>Oryzeae</taxon>
        <taxon>Oryzinae</taxon>
        <taxon>Oryza</taxon>
        <taxon>Oryza sativa</taxon>
    </lineage>
</organism>
<keyword id="KW-0472">Membrane</keyword>
<keyword id="KW-1185">Reference proteome</keyword>
<keyword id="KW-0762">Sugar transport</keyword>
<keyword id="KW-0769">Symport</keyword>
<keyword id="KW-0812">Transmembrane</keyword>
<keyword id="KW-1133">Transmembrane helix</keyword>
<keyword id="KW-0813">Transport</keyword>
<gene>
    <name evidence="4" type="primary">MST7</name>
    <name evidence="7" type="ordered locus">Os01g0567600</name>
    <name evidence="5" type="ordered locus">LOC_Os01g38680</name>
    <name evidence="8" type="ORF">OsJ_02268</name>
    <name evidence="6" type="ORF">P0002B05.21</name>
</gene>
<reference key="1">
    <citation type="submission" date="2004-06" db="EMBL/GenBank/DDBJ databases">
        <title>Monosaccharide transporter gene expression in rice anthers.</title>
        <authorList>
            <person name="Oliver S.N."/>
            <person name="Dennis E.S."/>
            <person name="Dolferus R."/>
        </authorList>
    </citation>
    <scope>NUCLEOTIDE SEQUENCE [MRNA]</scope>
</reference>
<reference key="2">
    <citation type="journal article" date="2002" name="Nature">
        <title>The genome sequence and structure of rice chromosome 1.</title>
        <authorList>
            <person name="Sasaki T."/>
            <person name="Matsumoto T."/>
            <person name="Yamamoto K."/>
            <person name="Sakata K."/>
            <person name="Baba T."/>
            <person name="Katayose Y."/>
            <person name="Wu J."/>
            <person name="Niimura Y."/>
            <person name="Cheng Z."/>
            <person name="Nagamura Y."/>
            <person name="Antonio B.A."/>
            <person name="Kanamori H."/>
            <person name="Hosokawa S."/>
            <person name="Masukawa M."/>
            <person name="Arikawa K."/>
            <person name="Chiden Y."/>
            <person name="Hayashi M."/>
            <person name="Okamoto M."/>
            <person name="Ando T."/>
            <person name="Aoki H."/>
            <person name="Arita K."/>
            <person name="Hamada M."/>
            <person name="Harada C."/>
            <person name="Hijishita S."/>
            <person name="Honda M."/>
            <person name="Ichikawa Y."/>
            <person name="Idonuma A."/>
            <person name="Iijima M."/>
            <person name="Ikeda M."/>
            <person name="Ikeno M."/>
            <person name="Ito S."/>
            <person name="Ito T."/>
            <person name="Ito Y."/>
            <person name="Ito Y."/>
            <person name="Iwabuchi A."/>
            <person name="Kamiya K."/>
            <person name="Karasawa W."/>
            <person name="Katagiri S."/>
            <person name="Kikuta A."/>
            <person name="Kobayashi N."/>
            <person name="Kono I."/>
            <person name="Machita K."/>
            <person name="Maehara T."/>
            <person name="Mizuno H."/>
            <person name="Mizubayashi T."/>
            <person name="Mukai Y."/>
            <person name="Nagasaki H."/>
            <person name="Nakashima M."/>
            <person name="Nakama Y."/>
            <person name="Nakamichi Y."/>
            <person name="Nakamura M."/>
            <person name="Namiki N."/>
            <person name="Negishi M."/>
            <person name="Ohta I."/>
            <person name="Ono N."/>
            <person name="Saji S."/>
            <person name="Sakai K."/>
            <person name="Shibata M."/>
            <person name="Shimokawa T."/>
            <person name="Shomura A."/>
            <person name="Song J."/>
            <person name="Takazaki Y."/>
            <person name="Terasawa K."/>
            <person name="Tsuji K."/>
            <person name="Waki K."/>
            <person name="Yamagata H."/>
            <person name="Yamane H."/>
            <person name="Yoshiki S."/>
            <person name="Yoshihara R."/>
            <person name="Yukawa K."/>
            <person name="Zhong H."/>
            <person name="Iwama H."/>
            <person name="Endo T."/>
            <person name="Ito H."/>
            <person name="Hahn J.H."/>
            <person name="Kim H.-I."/>
            <person name="Eun M.-Y."/>
            <person name="Yano M."/>
            <person name="Jiang J."/>
            <person name="Gojobori T."/>
        </authorList>
    </citation>
    <scope>NUCLEOTIDE SEQUENCE [LARGE SCALE GENOMIC DNA]</scope>
    <source>
        <strain>cv. Nipponbare</strain>
    </source>
</reference>
<reference key="3">
    <citation type="journal article" date="2005" name="Nature">
        <title>The map-based sequence of the rice genome.</title>
        <authorList>
            <consortium name="International rice genome sequencing project (IRGSP)"/>
        </authorList>
    </citation>
    <scope>NUCLEOTIDE SEQUENCE [LARGE SCALE GENOMIC DNA]</scope>
    <source>
        <strain>cv. Nipponbare</strain>
    </source>
</reference>
<reference key="4">
    <citation type="journal article" date="2008" name="Nucleic Acids Res.">
        <title>The rice annotation project database (RAP-DB): 2008 update.</title>
        <authorList>
            <consortium name="The rice annotation project (RAP)"/>
        </authorList>
    </citation>
    <scope>GENOME REANNOTATION</scope>
    <source>
        <strain>cv. Nipponbare</strain>
    </source>
</reference>
<reference key="5">
    <citation type="journal article" date="2013" name="Rice">
        <title>Improvement of the Oryza sativa Nipponbare reference genome using next generation sequence and optical map data.</title>
        <authorList>
            <person name="Kawahara Y."/>
            <person name="de la Bastide M."/>
            <person name="Hamilton J.P."/>
            <person name="Kanamori H."/>
            <person name="McCombie W.R."/>
            <person name="Ouyang S."/>
            <person name="Schwartz D.C."/>
            <person name="Tanaka T."/>
            <person name="Wu J."/>
            <person name="Zhou S."/>
            <person name="Childs K.L."/>
            <person name="Davidson R.M."/>
            <person name="Lin H."/>
            <person name="Quesada-Ocampo L."/>
            <person name="Vaillancourt B."/>
            <person name="Sakai H."/>
            <person name="Lee S.S."/>
            <person name="Kim J."/>
            <person name="Numa H."/>
            <person name="Itoh T."/>
            <person name="Buell C.R."/>
            <person name="Matsumoto T."/>
        </authorList>
    </citation>
    <scope>GENOME REANNOTATION</scope>
    <source>
        <strain>cv. Nipponbare</strain>
    </source>
</reference>
<reference key="6">
    <citation type="journal article" date="2005" name="PLoS Biol.">
        <title>The genomes of Oryza sativa: a history of duplications.</title>
        <authorList>
            <person name="Yu J."/>
            <person name="Wang J."/>
            <person name="Lin W."/>
            <person name="Li S."/>
            <person name="Li H."/>
            <person name="Zhou J."/>
            <person name="Ni P."/>
            <person name="Dong W."/>
            <person name="Hu S."/>
            <person name="Zeng C."/>
            <person name="Zhang J."/>
            <person name="Zhang Y."/>
            <person name="Li R."/>
            <person name="Xu Z."/>
            <person name="Li S."/>
            <person name="Li X."/>
            <person name="Zheng H."/>
            <person name="Cong L."/>
            <person name="Lin L."/>
            <person name="Yin J."/>
            <person name="Geng J."/>
            <person name="Li G."/>
            <person name="Shi J."/>
            <person name="Liu J."/>
            <person name="Lv H."/>
            <person name="Li J."/>
            <person name="Wang J."/>
            <person name="Deng Y."/>
            <person name="Ran L."/>
            <person name="Shi X."/>
            <person name="Wang X."/>
            <person name="Wu Q."/>
            <person name="Li C."/>
            <person name="Ren X."/>
            <person name="Wang J."/>
            <person name="Wang X."/>
            <person name="Li D."/>
            <person name="Liu D."/>
            <person name="Zhang X."/>
            <person name="Ji Z."/>
            <person name="Zhao W."/>
            <person name="Sun Y."/>
            <person name="Zhang Z."/>
            <person name="Bao J."/>
            <person name="Han Y."/>
            <person name="Dong L."/>
            <person name="Ji J."/>
            <person name="Chen P."/>
            <person name="Wu S."/>
            <person name="Liu J."/>
            <person name="Xiao Y."/>
            <person name="Bu D."/>
            <person name="Tan J."/>
            <person name="Yang L."/>
            <person name="Ye C."/>
            <person name="Zhang J."/>
            <person name="Xu J."/>
            <person name="Zhou Y."/>
            <person name="Yu Y."/>
            <person name="Zhang B."/>
            <person name="Zhuang S."/>
            <person name="Wei H."/>
            <person name="Liu B."/>
            <person name="Lei M."/>
            <person name="Yu H."/>
            <person name="Li Y."/>
            <person name="Xu H."/>
            <person name="Wei S."/>
            <person name="He X."/>
            <person name="Fang L."/>
            <person name="Zhang Z."/>
            <person name="Zhang Y."/>
            <person name="Huang X."/>
            <person name="Su Z."/>
            <person name="Tong W."/>
            <person name="Li J."/>
            <person name="Tong Z."/>
            <person name="Li S."/>
            <person name="Ye J."/>
            <person name="Wang L."/>
            <person name="Fang L."/>
            <person name="Lei T."/>
            <person name="Chen C.-S."/>
            <person name="Chen H.-C."/>
            <person name="Xu Z."/>
            <person name="Li H."/>
            <person name="Huang H."/>
            <person name="Zhang F."/>
            <person name="Xu H."/>
            <person name="Li N."/>
            <person name="Zhao C."/>
            <person name="Li S."/>
            <person name="Dong L."/>
            <person name="Huang Y."/>
            <person name="Li L."/>
            <person name="Xi Y."/>
            <person name="Qi Q."/>
            <person name="Li W."/>
            <person name="Zhang B."/>
            <person name="Hu W."/>
            <person name="Zhang Y."/>
            <person name="Tian X."/>
            <person name="Jiao Y."/>
            <person name="Liang X."/>
            <person name="Jin J."/>
            <person name="Gao L."/>
            <person name="Zheng W."/>
            <person name="Hao B."/>
            <person name="Liu S.-M."/>
            <person name="Wang W."/>
            <person name="Yuan L."/>
            <person name="Cao M."/>
            <person name="McDermott J."/>
            <person name="Samudrala R."/>
            <person name="Wang J."/>
            <person name="Wong G.K.-S."/>
            <person name="Yang H."/>
        </authorList>
    </citation>
    <scope>NUCLEOTIDE SEQUENCE [LARGE SCALE GENOMIC DNA]</scope>
    <source>
        <strain>cv. Nipponbare</strain>
    </source>
</reference>
<reference key="7">
    <citation type="journal article" date="2007" name="Plant Cell Physiol.">
        <title>ABA regulates apoplastic sugar transport and is a potential signal for cold-induced pollen sterility in rice.</title>
        <authorList>
            <person name="Oliver S.N."/>
            <person name="Dennis E.S."/>
            <person name="Dolferus R."/>
        </authorList>
    </citation>
    <scope>INDUCTION</scope>
</reference>
<dbReference type="EMBL" id="AY643749">
    <property type="protein sequence ID" value="AAT67218.1"/>
    <property type="molecule type" value="mRNA"/>
</dbReference>
<dbReference type="EMBL" id="AP003141">
    <property type="protein sequence ID" value="BAB63496.1"/>
    <property type="molecule type" value="Genomic_DNA"/>
</dbReference>
<dbReference type="EMBL" id="AP008207">
    <property type="protein sequence ID" value="BAF05284.1"/>
    <property type="molecule type" value="Genomic_DNA"/>
</dbReference>
<dbReference type="EMBL" id="AP014957">
    <property type="protein sequence ID" value="BAS72765.1"/>
    <property type="molecule type" value="Genomic_DNA"/>
</dbReference>
<dbReference type="EMBL" id="CM000138">
    <property type="protein sequence ID" value="EAZ12379.1"/>
    <property type="molecule type" value="Genomic_DNA"/>
</dbReference>
<dbReference type="SMR" id="Q94EC3"/>
<dbReference type="FunCoup" id="Q94EC3">
    <property type="interactions" value="108"/>
</dbReference>
<dbReference type="STRING" id="39947.Q94EC3"/>
<dbReference type="PaxDb" id="39947-Q94EC3"/>
<dbReference type="EnsemblPlants" id="Os01t0567600-00">
    <property type="protein sequence ID" value="Os01t0567600-00"/>
    <property type="gene ID" value="Os01g0567600"/>
</dbReference>
<dbReference type="GeneID" id="4326343"/>
<dbReference type="Gramene" id="Os01t0567600-00">
    <property type="protein sequence ID" value="Os01t0567600-00"/>
    <property type="gene ID" value="Os01g0567600"/>
</dbReference>
<dbReference type="KEGG" id="dosa:Os01g0567600"/>
<dbReference type="KEGG" id="osa:4326343"/>
<dbReference type="eggNOG" id="KOG0254">
    <property type="taxonomic scope" value="Eukaryota"/>
</dbReference>
<dbReference type="HOGENOM" id="CLU_001265_30_5_1"/>
<dbReference type="InParanoid" id="Q94EC3"/>
<dbReference type="OMA" id="APKHYPG"/>
<dbReference type="OrthoDB" id="5296287at2759"/>
<dbReference type="Proteomes" id="UP000000763">
    <property type="component" value="Chromosome 1"/>
</dbReference>
<dbReference type="Proteomes" id="UP000007752">
    <property type="component" value="Chromosome 1"/>
</dbReference>
<dbReference type="Proteomes" id="UP000059680">
    <property type="component" value="Chromosome 1"/>
</dbReference>
<dbReference type="GO" id="GO:0016020">
    <property type="term" value="C:membrane"/>
    <property type="evidence" value="ECO:0007669"/>
    <property type="project" value="UniProtKB-SubCell"/>
</dbReference>
<dbReference type="GO" id="GO:0015145">
    <property type="term" value="F:monosaccharide transmembrane transporter activity"/>
    <property type="evidence" value="ECO:0007669"/>
    <property type="project" value="InterPro"/>
</dbReference>
<dbReference type="GO" id="GO:0015293">
    <property type="term" value="F:symporter activity"/>
    <property type="evidence" value="ECO:0007669"/>
    <property type="project" value="UniProtKB-KW"/>
</dbReference>
<dbReference type="CDD" id="cd17361">
    <property type="entry name" value="MFS_STP"/>
    <property type="match status" value="1"/>
</dbReference>
<dbReference type="FunFam" id="1.20.1250.20:FF:000002">
    <property type="entry name" value="Sugar transport protein 13"/>
    <property type="match status" value="1"/>
</dbReference>
<dbReference type="Gene3D" id="1.20.1250.20">
    <property type="entry name" value="MFS general substrate transporter like domains"/>
    <property type="match status" value="1"/>
</dbReference>
<dbReference type="InterPro" id="IPR020846">
    <property type="entry name" value="MFS_dom"/>
</dbReference>
<dbReference type="InterPro" id="IPR044778">
    <property type="entry name" value="MFS_STP/MST-like_plant"/>
</dbReference>
<dbReference type="InterPro" id="IPR005828">
    <property type="entry name" value="MFS_sugar_transport-like"/>
</dbReference>
<dbReference type="InterPro" id="IPR036259">
    <property type="entry name" value="MFS_trans_sf"/>
</dbReference>
<dbReference type="InterPro" id="IPR045262">
    <property type="entry name" value="STP/PLT_plant"/>
</dbReference>
<dbReference type="InterPro" id="IPR003663">
    <property type="entry name" value="Sugar/inositol_transpt"/>
</dbReference>
<dbReference type="InterPro" id="IPR005829">
    <property type="entry name" value="Sugar_transporter_CS"/>
</dbReference>
<dbReference type="NCBIfam" id="TIGR00879">
    <property type="entry name" value="SP"/>
    <property type="match status" value="1"/>
</dbReference>
<dbReference type="PANTHER" id="PTHR23500">
    <property type="entry name" value="SOLUTE CARRIER FAMILY 2, FACILITATED GLUCOSE TRANSPORTER"/>
    <property type="match status" value="1"/>
</dbReference>
<dbReference type="PANTHER" id="PTHR23500:SF10">
    <property type="entry name" value="SUGAR TRANSPORT PROTEIN MST8"/>
    <property type="match status" value="1"/>
</dbReference>
<dbReference type="Pfam" id="PF00083">
    <property type="entry name" value="Sugar_tr"/>
    <property type="match status" value="1"/>
</dbReference>
<dbReference type="PRINTS" id="PR00171">
    <property type="entry name" value="SUGRTRNSPORT"/>
</dbReference>
<dbReference type="SUPFAM" id="SSF103473">
    <property type="entry name" value="MFS general substrate transporter"/>
    <property type="match status" value="1"/>
</dbReference>
<dbReference type="PROSITE" id="PS50850">
    <property type="entry name" value="MFS"/>
    <property type="match status" value="1"/>
</dbReference>
<dbReference type="PROSITE" id="PS00216">
    <property type="entry name" value="SUGAR_TRANSPORT_1"/>
    <property type="match status" value="1"/>
</dbReference>
<dbReference type="PROSITE" id="PS00217">
    <property type="entry name" value="SUGAR_TRANSPORT_2"/>
    <property type="match status" value="1"/>
</dbReference>